<sequence>MPMPPDDSALSLLPDHPLAAHNTFGIDATARFAARVTHAAQFAALHRDPRVAHLSQLVLGGGSNVVFTRDFDGVVLLDEIAGRRVVREDDDAWYVEAGGGETWHAFVAWTLEHGMPGLENLALIPGTVGAAPIQNIGAYGLEMKTYFDSLVAVELATGRSERFDAARCAFGYRDSFFKREGRGRFAIVAVTFRLPKRWTPRLGYADVTRELDARGIAPDAATPRDVFDAVVAIRRAKLPDPLELGNAGSFFKNPVIDAAQFDALRARVPDVVSYPQPGGQVKLAAGWLIDRCGWKGRTLGAAAVHDRQALVLVNRGGATGADVLALARAIQDDVRKQFGVELEPEPVCV</sequence>
<evidence type="ECO:0000255" key="1">
    <source>
        <dbReference type="HAMAP-Rule" id="MF_00037"/>
    </source>
</evidence>
<comment type="function">
    <text evidence="1">Cell wall formation.</text>
</comment>
<comment type="catalytic activity">
    <reaction evidence="1">
        <text>UDP-N-acetyl-alpha-D-muramate + NADP(+) = UDP-N-acetyl-3-O-(1-carboxyvinyl)-alpha-D-glucosamine + NADPH + H(+)</text>
        <dbReference type="Rhea" id="RHEA:12248"/>
        <dbReference type="ChEBI" id="CHEBI:15378"/>
        <dbReference type="ChEBI" id="CHEBI:57783"/>
        <dbReference type="ChEBI" id="CHEBI:58349"/>
        <dbReference type="ChEBI" id="CHEBI:68483"/>
        <dbReference type="ChEBI" id="CHEBI:70757"/>
        <dbReference type="EC" id="1.3.1.98"/>
    </reaction>
</comment>
<comment type="cofactor">
    <cofactor evidence="1">
        <name>FAD</name>
        <dbReference type="ChEBI" id="CHEBI:57692"/>
    </cofactor>
</comment>
<comment type="pathway">
    <text evidence="1">Cell wall biogenesis; peptidoglycan biosynthesis.</text>
</comment>
<comment type="subcellular location">
    <subcellularLocation>
        <location evidence="1">Cytoplasm</location>
    </subcellularLocation>
</comment>
<comment type="similarity">
    <text evidence="1">Belongs to the MurB family.</text>
</comment>
<accession>B1YVE7</accession>
<reference key="1">
    <citation type="submission" date="2008-04" db="EMBL/GenBank/DDBJ databases">
        <title>Complete sequence of chromosome 1 of Burkholderia ambifaria MC40-6.</title>
        <authorList>
            <person name="Copeland A."/>
            <person name="Lucas S."/>
            <person name="Lapidus A."/>
            <person name="Glavina del Rio T."/>
            <person name="Dalin E."/>
            <person name="Tice H."/>
            <person name="Pitluck S."/>
            <person name="Chain P."/>
            <person name="Malfatti S."/>
            <person name="Shin M."/>
            <person name="Vergez L."/>
            <person name="Lang D."/>
            <person name="Schmutz J."/>
            <person name="Larimer F."/>
            <person name="Land M."/>
            <person name="Hauser L."/>
            <person name="Kyrpides N."/>
            <person name="Lykidis A."/>
            <person name="Ramette A."/>
            <person name="Konstantinidis K."/>
            <person name="Tiedje J."/>
            <person name="Richardson P."/>
        </authorList>
    </citation>
    <scope>NUCLEOTIDE SEQUENCE [LARGE SCALE GENOMIC DNA]</scope>
    <source>
        <strain>MC40-6</strain>
    </source>
</reference>
<organism>
    <name type="scientific">Burkholderia ambifaria (strain MC40-6)</name>
    <dbReference type="NCBI Taxonomy" id="398577"/>
    <lineage>
        <taxon>Bacteria</taxon>
        <taxon>Pseudomonadati</taxon>
        <taxon>Pseudomonadota</taxon>
        <taxon>Betaproteobacteria</taxon>
        <taxon>Burkholderiales</taxon>
        <taxon>Burkholderiaceae</taxon>
        <taxon>Burkholderia</taxon>
        <taxon>Burkholderia cepacia complex</taxon>
    </lineage>
</organism>
<gene>
    <name evidence="1" type="primary">murB</name>
    <name type="ordered locus">BamMC406_2473</name>
</gene>
<protein>
    <recommendedName>
        <fullName evidence="1">UDP-N-acetylenolpyruvoylglucosamine reductase</fullName>
        <ecNumber evidence="1">1.3.1.98</ecNumber>
    </recommendedName>
    <alternativeName>
        <fullName evidence="1">UDP-N-acetylmuramate dehydrogenase</fullName>
    </alternativeName>
</protein>
<proteinExistence type="inferred from homology"/>
<name>MURB_BURA4</name>
<keyword id="KW-0131">Cell cycle</keyword>
<keyword id="KW-0132">Cell division</keyword>
<keyword id="KW-0133">Cell shape</keyword>
<keyword id="KW-0961">Cell wall biogenesis/degradation</keyword>
<keyword id="KW-0963">Cytoplasm</keyword>
<keyword id="KW-0274">FAD</keyword>
<keyword id="KW-0285">Flavoprotein</keyword>
<keyword id="KW-0521">NADP</keyword>
<keyword id="KW-0560">Oxidoreductase</keyword>
<keyword id="KW-0573">Peptidoglycan synthesis</keyword>
<feature type="chain" id="PRO_1000191402" description="UDP-N-acetylenolpyruvoylglucosamine reductase">
    <location>
        <begin position="1"/>
        <end position="349"/>
    </location>
</feature>
<feature type="domain" description="FAD-binding PCMH-type" evidence="1">
    <location>
        <begin position="24"/>
        <end position="197"/>
    </location>
</feature>
<feature type="active site" evidence="1">
    <location>
        <position position="173"/>
    </location>
</feature>
<feature type="active site" description="Proton donor" evidence="1">
    <location>
        <position position="249"/>
    </location>
</feature>
<feature type="active site" evidence="1">
    <location>
        <position position="345"/>
    </location>
</feature>
<dbReference type="EC" id="1.3.1.98" evidence="1"/>
<dbReference type="EMBL" id="CP001025">
    <property type="protein sequence ID" value="ACB64951.1"/>
    <property type="molecule type" value="Genomic_DNA"/>
</dbReference>
<dbReference type="RefSeq" id="WP_012364547.1">
    <property type="nucleotide sequence ID" value="NC_010551.1"/>
</dbReference>
<dbReference type="SMR" id="B1YVE7"/>
<dbReference type="KEGG" id="bac:BamMC406_2473"/>
<dbReference type="HOGENOM" id="CLU_035304_0_0_4"/>
<dbReference type="OrthoDB" id="9804753at2"/>
<dbReference type="UniPathway" id="UPA00219"/>
<dbReference type="Proteomes" id="UP000001680">
    <property type="component" value="Chromosome 1"/>
</dbReference>
<dbReference type="GO" id="GO:0005829">
    <property type="term" value="C:cytosol"/>
    <property type="evidence" value="ECO:0007669"/>
    <property type="project" value="TreeGrafter"/>
</dbReference>
<dbReference type="GO" id="GO:0071949">
    <property type="term" value="F:FAD binding"/>
    <property type="evidence" value="ECO:0007669"/>
    <property type="project" value="InterPro"/>
</dbReference>
<dbReference type="GO" id="GO:0008762">
    <property type="term" value="F:UDP-N-acetylmuramate dehydrogenase activity"/>
    <property type="evidence" value="ECO:0007669"/>
    <property type="project" value="UniProtKB-UniRule"/>
</dbReference>
<dbReference type="GO" id="GO:0051301">
    <property type="term" value="P:cell division"/>
    <property type="evidence" value="ECO:0007669"/>
    <property type="project" value="UniProtKB-KW"/>
</dbReference>
<dbReference type="GO" id="GO:0071555">
    <property type="term" value="P:cell wall organization"/>
    <property type="evidence" value="ECO:0007669"/>
    <property type="project" value="UniProtKB-KW"/>
</dbReference>
<dbReference type="GO" id="GO:0009252">
    <property type="term" value="P:peptidoglycan biosynthetic process"/>
    <property type="evidence" value="ECO:0007669"/>
    <property type="project" value="UniProtKB-UniRule"/>
</dbReference>
<dbReference type="GO" id="GO:0008360">
    <property type="term" value="P:regulation of cell shape"/>
    <property type="evidence" value="ECO:0007669"/>
    <property type="project" value="UniProtKB-KW"/>
</dbReference>
<dbReference type="Gene3D" id="3.30.465.10">
    <property type="match status" value="1"/>
</dbReference>
<dbReference type="Gene3D" id="3.90.78.10">
    <property type="entry name" value="UDP-N-acetylenolpyruvoylglucosamine reductase, C-terminal domain"/>
    <property type="match status" value="1"/>
</dbReference>
<dbReference type="Gene3D" id="3.30.43.10">
    <property type="entry name" value="Uridine Diphospho-n-acetylenolpyruvylglucosamine Reductase, domain 2"/>
    <property type="match status" value="1"/>
</dbReference>
<dbReference type="HAMAP" id="MF_00037">
    <property type="entry name" value="MurB"/>
    <property type="match status" value="1"/>
</dbReference>
<dbReference type="InterPro" id="IPR016166">
    <property type="entry name" value="FAD-bd_PCMH"/>
</dbReference>
<dbReference type="InterPro" id="IPR036318">
    <property type="entry name" value="FAD-bd_PCMH-like_sf"/>
</dbReference>
<dbReference type="InterPro" id="IPR016167">
    <property type="entry name" value="FAD-bd_PCMH_sub1"/>
</dbReference>
<dbReference type="InterPro" id="IPR016169">
    <property type="entry name" value="FAD-bd_PCMH_sub2"/>
</dbReference>
<dbReference type="InterPro" id="IPR003170">
    <property type="entry name" value="MurB"/>
</dbReference>
<dbReference type="InterPro" id="IPR011601">
    <property type="entry name" value="MurB_C"/>
</dbReference>
<dbReference type="InterPro" id="IPR036635">
    <property type="entry name" value="MurB_C_sf"/>
</dbReference>
<dbReference type="InterPro" id="IPR006094">
    <property type="entry name" value="Oxid_FAD_bind_N"/>
</dbReference>
<dbReference type="NCBIfam" id="TIGR00179">
    <property type="entry name" value="murB"/>
    <property type="match status" value="1"/>
</dbReference>
<dbReference type="NCBIfam" id="NF000755">
    <property type="entry name" value="PRK00046.1"/>
    <property type="match status" value="1"/>
</dbReference>
<dbReference type="NCBIfam" id="NF010478">
    <property type="entry name" value="PRK13903.1"/>
    <property type="match status" value="1"/>
</dbReference>
<dbReference type="PANTHER" id="PTHR21071">
    <property type="entry name" value="UDP-N-ACETYLENOLPYRUVOYLGLUCOSAMINE REDUCTASE"/>
    <property type="match status" value="1"/>
</dbReference>
<dbReference type="PANTHER" id="PTHR21071:SF4">
    <property type="entry name" value="UDP-N-ACETYLENOLPYRUVOYLGLUCOSAMINE REDUCTASE"/>
    <property type="match status" value="1"/>
</dbReference>
<dbReference type="Pfam" id="PF01565">
    <property type="entry name" value="FAD_binding_4"/>
    <property type="match status" value="1"/>
</dbReference>
<dbReference type="Pfam" id="PF02873">
    <property type="entry name" value="MurB_C"/>
    <property type="match status" value="1"/>
</dbReference>
<dbReference type="SUPFAM" id="SSF56176">
    <property type="entry name" value="FAD-binding/transporter-associated domain-like"/>
    <property type="match status" value="1"/>
</dbReference>
<dbReference type="SUPFAM" id="SSF56194">
    <property type="entry name" value="Uridine diphospho-N-Acetylenolpyruvylglucosamine reductase, MurB, C-terminal domain"/>
    <property type="match status" value="1"/>
</dbReference>
<dbReference type="PROSITE" id="PS51387">
    <property type="entry name" value="FAD_PCMH"/>
    <property type="match status" value="1"/>
</dbReference>